<accession>B5BEP9</accession>
<dbReference type="EC" id="1.18.1.-" evidence="1"/>
<dbReference type="EMBL" id="FM200053">
    <property type="protein sequence ID" value="CAR60749.1"/>
    <property type="molecule type" value="Genomic_DNA"/>
</dbReference>
<dbReference type="RefSeq" id="WP_000086345.1">
    <property type="nucleotide sequence ID" value="NC_011147.1"/>
</dbReference>
<dbReference type="SMR" id="B5BEP9"/>
<dbReference type="KEGG" id="sek:SSPA2513"/>
<dbReference type="HOGENOM" id="CLU_003291_4_4_6"/>
<dbReference type="UniPathway" id="UPA00638"/>
<dbReference type="Proteomes" id="UP000001869">
    <property type="component" value="Chromosome"/>
</dbReference>
<dbReference type="GO" id="GO:0005737">
    <property type="term" value="C:cytoplasm"/>
    <property type="evidence" value="ECO:0007669"/>
    <property type="project" value="UniProtKB-SubCell"/>
</dbReference>
<dbReference type="GO" id="GO:0016731">
    <property type="term" value="F:oxidoreductase activity, acting on iron-sulfur proteins as donors, NAD or NADP as acceptor"/>
    <property type="evidence" value="ECO:0007669"/>
    <property type="project" value="UniProtKB-UniRule"/>
</dbReference>
<dbReference type="Gene3D" id="3.30.390.120">
    <property type="match status" value="1"/>
</dbReference>
<dbReference type="Gene3D" id="3.50.50.60">
    <property type="entry name" value="FAD/NAD(P)-binding domain"/>
    <property type="match status" value="2"/>
</dbReference>
<dbReference type="HAMAP" id="MF_01313">
    <property type="entry name" value="NorW"/>
    <property type="match status" value="1"/>
</dbReference>
<dbReference type="InterPro" id="IPR050260">
    <property type="entry name" value="FAD-bd_OxRdtase"/>
</dbReference>
<dbReference type="InterPro" id="IPR036188">
    <property type="entry name" value="FAD/NAD-bd_sf"/>
</dbReference>
<dbReference type="InterPro" id="IPR023753">
    <property type="entry name" value="FAD/NAD-binding_dom"/>
</dbReference>
<dbReference type="InterPro" id="IPR023961">
    <property type="entry name" value="NO_rdtase_NorW"/>
</dbReference>
<dbReference type="InterPro" id="IPR041364">
    <property type="entry name" value="Rbx-bd"/>
</dbReference>
<dbReference type="NCBIfam" id="NF003437">
    <property type="entry name" value="PRK04965.1"/>
    <property type="match status" value="1"/>
</dbReference>
<dbReference type="PANTHER" id="PTHR43429:SF3">
    <property type="entry name" value="NITRITE REDUCTASE [NAD(P)H]"/>
    <property type="match status" value="1"/>
</dbReference>
<dbReference type="PANTHER" id="PTHR43429">
    <property type="entry name" value="PYRIDINE NUCLEOTIDE-DISULFIDE OXIDOREDUCTASE DOMAIN-CONTAINING"/>
    <property type="match status" value="1"/>
</dbReference>
<dbReference type="Pfam" id="PF07992">
    <property type="entry name" value="Pyr_redox_2"/>
    <property type="match status" value="1"/>
</dbReference>
<dbReference type="Pfam" id="PF18113">
    <property type="entry name" value="Rbx_binding"/>
    <property type="match status" value="1"/>
</dbReference>
<dbReference type="PRINTS" id="PR00368">
    <property type="entry name" value="FADPNR"/>
</dbReference>
<dbReference type="PRINTS" id="PR00411">
    <property type="entry name" value="PNDRDTASEI"/>
</dbReference>
<dbReference type="SUPFAM" id="SSF51905">
    <property type="entry name" value="FAD/NAD(P)-binding domain"/>
    <property type="match status" value="1"/>
</dbReference>
<sequence length="377" mass="41148">MSRGIIIIGSGFAARQLVKNIRKQDAHVPLTLIAADSMDEYNKPDLSHVISQSQRADDLTRQLAGEFAEQFNLRLFPHTWVTDIDADAHVVKSQDKQWQYDKLVLATGAAAFVPPIAGRELMLTLNNQQEYRACETPLRDAQRVLIVGGGLIGSELAMDFCRAGKTVTLMDNAASLLASLMPPEVSSRLQHHLTDMGVHLLLKSQLQKLEKIEAGIRATLASQRSIEVDAVIAATGLRPETALARRAGVVVNRGVCVDSYLQTSHPDIYAIGDCAEINGQVLPFLQPIQLSAMYLAKNLLGGNAPLKLPAMLVKVKTPELPLHLAGETQRRDLSWQITAESDGMIAKGMSGEGQLRAFVVSEDRMKEAFALLKTLSV</sequence>
<organism>
    <name type="scientific">Salmonella paratyphi A (strain AKU_12601)</name>
    <dbReference type="NCBI Taxonomy" id="554290"/>
    <lineage>
        <taxon>Bacteria</taxon>
        <taxon>Pseudomonadati</taxon>
        <taxon>Pseudomonadota</taxon>
        <taxon>Gammaproteobacteria</taxon>
        <taxon>Enterobacterales</taxon>
        <taxon>Enterobacteriaceae</taxon>
        <taxon>Salmonella</taxon>
    </lineage>
</organism>
<gene>
    <name evidence="1" type="primary">norW</name>
    <name evidence="1" type="synonym">flrR</name>
    <name type="ordered locus">SSPA2513</name>
</gene>
<comment type="function">
    <text evidence="1">One of at least two accessory proteins for anaerobic nitric oxide (NO) reductase. Reduces the rubredoxin moiety of NO reductase.</text>
</comment>
<comment type="catalytic activity">
    <reaction evidence="1">
        <text>2 reduced [nitric oxide reductase rubredoxin domain] + NAD(+) + H(+) = 2 oxidized [nitric oxide reductase rubredoxin domain] + NADH</text>
        <dbReference type="Rhea" id="RHEA:42960"/>
        <dbReference type="Rhea" id="RHEA-COMP:10304"/>
        <dbReference type="Rhea" id="RHEA-COMP:10305"/>
        <dbReference type="ChEBI" id="CHEBI:15378"/>
        <dbReference type="ChEBI" id="CHEBI:29033"/>
        <dbReference type="ChEBI" id="CHEBI:29034"/>
        <dbReference type="ChEBI" id="CHEBI:57540"/>
        <dbReference type="ChEBI" id="CHEBI:57945"/>
    </reaction>
</comment>
<comment type="cofactor">
    <cofactor evidence="1">
        <name>FAD</name>
        <dbReference type="ChEBI" id="CHEBI:57692"/>
    </cofactor>
</comment>
<comment type="pathway">
    <text evidence="1">Nitrogen metabolism; nitric oxide reduction.</text>
</comment>
<comment type="subcellular location">
    <subcellularLocation>
        <location evidence="1">Cytoplasm</location>
    </subcellularLocation>
</comment>
<comment type="similarity">
    <text evidence="1">Belongs to the FAD-dependent oxidoreductase family.</text>
</comment>
<reference key="1">
    <citation type="journal article" date="2009" name="BMC Genomics">
        <title>Pseudogene accumulation in the evolutionary histories of Salmonella enterica serovars Paratyphi A and Typhi.</title>
        <authorList>
            <person name="Holt K.E."/>
            <person name="Thomson N.R."/>
            <person name="Wain J."/>
            <person name="Langridge G.C."/>
            <person name="Hasan R."/>
            <person name="Bhutta Z.A."/>
            <person name="Quail M.A."/>
            <person name="Norbertczak H."/>
            <person name="Walker D."/>
            <person name="Simmonds M."/>
            <person name="White B."/>
            <person name="Bason N."/>
            <person name="Mungall K."/>
            <person name="Dougan G."/>
            <person name="Parkhill J."/>
        </authorList>
    </citation>
    <scope>NUCLEOTIDE SEQUENCE [LARGE SCALE GENOMIC DNA]</scope>
    <source>
        <strain>AKU_12601</strain>
    </source>
</reference>
<proteinExistence type="inferred from homology"/>
<name>NORW_SALPK</name>
<protein>
    <recommendedName>
        <fullName evidence="1">Nitric oxide reductase FlRd-NAD(+) reductase</fullName>
        <ecNumber evidence="1">1.18.1.-</ecNumber>
    </recommendedName>
    <alternativeName>
        <fullName evidence="1">Flavorubredoxin reductase</fullName>
        <shortName evidence="1">FlRd-reductase</shortName>
        <shortName evidence="1">FlavoRb reductase</shortName>
    </alternativeName>
</protein>
<feature type="chain" id="PRO_1000141183" description="Nitric oxide reductase FlRd-NAD(+) reductase">
    <location>
        <begin position="1"/>
        <end position="377"/>
    </location>
</feature>
<keyword id="KW-0963">Cytoplasm</keyword>
<keyword id="KW-0274">FAD</keyword>
<keyword id="KW-0285">Flavoprotein</keyword>
<keyword id="KW-0520">NAD</keyword>
<keyword id="KW-0560">Oxidoreductase</keyword>
<evidence type="ECO:0000255" key="1">
    <source>
        <dbReference type="HAMAP-Rule" id="MF_01313"/>
    </source>
</evidence>